<dbReference type="EMBL" id="CR936503">
    <property type="protein sequence ID" value="CAI55569.1"/>
    <property type="molecule type" value="Genomic_DNA"/>
</dbReference>
<dbReference type="RefSeq" id="WP_011374962.1">
    <property type="nucleotide sequence ID" value="NC_007576.1"/>
</dbReference>
<dbReference type="SMR" id="Q38W64"/>
<dbReference type="STRING" id="314315.LCA_1265"/>
<dbReference type="GeneID" id="57132180"/>
<dbReference type="KEGG" id="lsa:LCA_1265"/>
<dbReference type="eggNOG" id="COG0052">
    <property type="taxonomic scope" value="Bacteria"/>
</dbReference>
<dbReference type="HOGENOM" id="CLU_040318_1_2_9"/>
<dbReference type="OrthoDB" id="9808036at2"/>
<dbReference type="Proteomes" id="UP000002707">
    <property type="component" value="Chromosome"/>
</dbReference>
<dbReference type="GO" id="GO:0022627">
    <property type="term" value="C:cytosolic small ribosomal subunit"/>
    <property type="evidence" value="ECO:0007669"/>
    <property type="project" value="TreeGrafter"/>
</dbReference>
<dbReference type="GO" id="GO:0003735">
    <property type="term" value="F:structural constituent of ribosome"/>
    <property type="evidence" value="ECO:0007669"/>
    <property type="project" value="InterPro"/>
</dbReference>
<dbReference type="GO" id="GO:0006412">
    <property type="term" value="P:translation"/>
    <property type="evidence" value="ECO:0007669"/>
    <property type="project" value="UniProtKB-UniRule"/>
</dbReference>
<dbReference type="CDD" id="cd01425">
    <property type="entry name" value="RPS2"/>
    <property type="match status" value="1"/>
</dbReference>
<dbReference type="FunFam" id="1.10.287.610:FF:000001">
    <property type="entry name" value="30S ribosomal protein S2"/>
    <property type="match status" value="1"/>
</dbReference>
<dbReference type="Gene3D" id="3.40.50.10490">
    <property type="entry name" value="Glucose-6-phosphate isomerase like protein, domain 1"/>
    <property type="match status" value="1"/>
</dbReference>
<dbReference type="Gene3D" id="1.10.287.610">
    <property type="entry name" value="Helix hairpin bin"/>
    <property type="match status" value="1"/>
</dbReference>
<dbReference type="HAMAP" id="MF_00291_B">
    <property type="entry name" value="Ribosomal_uS2_B"/>
    <property type="match status" value="1"/>
</dbReference>
<dbReference type="InterPro" id="IPR001865">
    <property type="entry name" value="Ribosomal_uS2"/>
</dbReference>
<dbReference type="InterPro" id="IPR005706">
    <property type="entry name" value="Ribosomal_uS2_bac/mit/plastid"/>
</dbReference>
<dbReference type="InterPro" id="IPR018130">
    <property type="entry name" value="Ribosomal_uS2_CS"/>
</dbReference>
<dbReference type="InterPro" id="IPR023591">
    <property type="entry name" value="Ribosomal_uS2_flav_dom_sf"/>
</dbReference>
<dbReference type="NCBIfam" id="TIGR01011">
    <property type="entry name" value="rpsB_bact"/>
    <property type="match status" value="1"/>
</dbReference>
<dbReference type="PANTHER" id="PTHR12534">
    <property type="entry name" value="30S RIBOSOMAL PROTEIN S2 PROKARYOTIC AND ORGANELLAR"/>
    <property type="match status" value="1"/>
</dbReference>
<dbReference type="PANTHER" id="PTHR12534:SF0">
    <property type="entry name" value="SMALL RIBOSOMAL SUBUNIT PROTEIN US2M"/>
    <property type="match status" value="1"/>
</dbReference>
<dbReference type="Pfam" id="PF00318">
    <property type="entry name" value="Ribosomal_S2"/>
    <property type="match status" value="1"/>
</dbReference>
<dbReference type="PRINTS" id="PR00395">
    <property type="entry name" value="RIBOSOMALS2"/>
</dbReference>
<dbReference type="SUPFAM" id="SSF52313">
    <property type="entry name" value="Ribosomal protein S2"/>
    <property type="match status" value="1"/>
</dbReference>
<dbReference type="PROSITE" id="PS00962">
    <property type="entry name" value="RIBOSOMAL_S2_1"/>
    <property type="match status" value="1"/>
</dbReference>
<dbReference type="PROSITE" id="PS00963">
    <property type="entry name" value="RIBOSOMAL_S2_2"/>
    <property type="match status" value="1"/>
</dbReference>
<accession>Q38W64</accession>
<gene>
    <name evidence="1" type="primary">rpsB</name>
    <name type="ordered locus">LCA_1265</name>
</gene>
<organism>
    <name type="scientific">Latilactobacillus sakei subsp. sakei (strain 23K)</name>
    <name type="common">Lactobacillus sakei subsp. sakei</name>
    <dbReference type="NCBI Taxonomy" id="314315"/>
    <lineage>
        <taxon>Bacteria</taxon>
        <taxon>Bacillati</taxon>
        <taxon>Bacillota</taxon>
        <taxon>Bacilli</taxon>
        <taxon>Lactobacillales</taxon>
        <taxon>Lactobacillaceae</taxon>
        <taxon>Latilactobacillus</taxon>
    </lineage>
</organism>
<name>RS2_LATSS</name>
<feature type="chain" id="PRO_1000003988" description="Small ribosomal subunit protein uS2">
    <location>
        <begin position="1"/>
        <end position="264"/>
    </location>
</feature>
<evidence type="ECO:0000255" key="1">
    <source>
        <dbReference type="HAMAP-Rule" id="MF_00291"/>
    </source>
</evidence>
<evidence type="ECO:0000305" key="2"/>
<sequence>MAVLSMKQLLEAGVHFGHQTRRWNPKMKKFIFTERNGIYIIDLQKTVRMVDDAYDFVKEEAANEGVFLFVGTKKQAQDAIAEESVRAGQYFVNHRWLGGTLTNWDTIQKRIKRLKEIKAMDEDGTFERLPKKEVALLKKQQEKLEKFLGGIEDMPRIPDVMFVVDPRKERIAIKEAQKLNIPVVAMVDTNSDPDDIDVIIPSNDDAIRAVRLITAKMADAIIEGRQGEDDVEEATFAAENKSADSMEEIVEAVEGNNDTNTDAK</sequence>
<proteinExistence type="inferred from homology"/>
<keyword id="KW-1185">Reference proteome</keyword>
<keyword id="KW-0687">Ribonucleoprotein</keyword>
<keyword id="KW-0689">Ribosomal protein</keyword>
<comment type="similarity">
    <text evidence="1">Belongs to the universal ribosomal protein uS2 family.</text>
</comment>
<protein>
    <recommendedName>
        <fullName evidence="1">Small ribosomal subunit protein uS2</fullName>
    </recommendedName>
    <alternativeName>
        <fullName evidence="2">30S ribosomal protein S2</fullName>
    </alternativeName>
</protein>
<reference key="1">
    <citation type="journal article" date="2005" name="Nat. Biotechnol.">
        <title>The complete genome sequence of the meat-borne lactic acid bacterium Lactobacillus sakei 23K.</title>
        <authorList>
            <person name="Chaillou S."/>
            <person name="Champomier-Verges M.-C."/>
            <person name="Cornet M."/>
            <person name="Crutz-Le Coq A.-M."/>
            <person name="Dudez A.-M."/>
            <person name="Martin V."/>
            <person name="Beaufils S."/>
            <person name="Darbon-Rongere E."/>
            <person name="Bossy R."/>
            <person name="Loux V."/>
            <person name="Zagorec M."/>
        </authorList>
    </citation>
    <scope>NUCLEOTIDE SEQUENCE [LARGE SCALE GENOMIC DNA]</scope>
    <source>
        <strain>23K</strain>
    </source>
</reference>